<organism>
    <name type="scientific">Thermococcus kodakarensis (strain ATCC BAA-918 / JCM 12380 / KOD1)</name>
    <name type="common">Pyrococcus kodakaraensis (strain KOD1)</name>
    <dbReference type="NCBI Taxonomy" id="69014"/>
    <lineage>
        <taxon>Archaea</taxon>
        <taxon>Methanobacteriati</taxon>
        <taxon>Methanobacteriota</taxon>
        <taxon>Thermococci</taxon>
        <taxon>Thermococcales</taxon>
        <taxon>Thermococcaceae</taxon>
        <taxon>Thermococcus</taxon>
    </lineage>
</organism>
<proteinExistence type="inferred from homology"/>
<name>Y1926_THEKO</name>
<evidence type="ECO:0000255" key="1">
    <source>
        <dbReference type="HAMAP-Rule" id="MF_00338"/>
    </source>
</evidence>
<protein>
    <recommendedName>
        <fullName evidence="1">UPF0145 protein TK1926</fullName>
    </recommendedName>
</protein>
<accession>Q5JET9</accession>
<dbReference type="EMBL" id="AP006878">
    <property type="protein sequence ID" value="BAD86115.1"/>
    <property type="molecule type" value="Genomic_DNA"/>
</dbReference>
<dbReference type="RefSeq" id="WP_011250876.1">
    <property type="nucleotide sequence ID" value="NC_006624.1"/>
</dbReference>
<dbReference type="SMR" id="Q5JET9"/>
<dbReference type="STRING" id="69014.TK1926"/>
<dbReference type="EnsemblBacteria" id="BAD86115">
    <property type="protein sequence ID" value="BAD86115"/>
    <property type="gene ID" value="TK1926"/>
</dbReference>
<dbReference type="GeneID" id="78448457"/>
<dbReference type="KEGG" id="tko:TK1926"/>
<dbReference type="PATRIC" id="fig|69014.16.peg.1882"/>
<dbReference type="eggNOG" id="arCOG02287">
    <property type="taxonomic scope" value="Archaea"/>
</dbReference>
<dbReference type="HOGENOM" id="CLU_117144_1_2_2"/>
<dbReference type="InParanoid" id="Q5JET9"/>
<dbReference type="OrthoDB" id="59443at2157"/>
<dbReference type="PhylomeDB" id="Q5JET9"/>
<dbReference type="Proteomes" id="UP000000536">
    <property type="component" value="Chromosome"/>
</dbReference>
<dbReference type="Gene3D" id="3.30.110.70">
    <property type="entry name" value="Hypothetical protein apc22750. Chain B"/>
    <property type="match status" value="1"/>
</dbReference>
<dbReference type="HAMAP" id="MF_00338">
    <property type="entry name" value="UPF0145"/>
    <property type="match status" value="1"/>
</dbReference>
<dbReference type="InterPro" id="IPR035439">
    <property type="entry name" value="UPF0145_dom_sf"/>
</dbReference>
<dbReference type="InterPro" id="IPR002765">
    <property type="entry name" value="UPF0145_YbjQ-like"/>
</dbReference>
<dbReference type="NCBIfam" id="NF002989">
    <property type="entry name" value="PRK03732.1"/>
    <property type="match status" value="1"/>
</dbReference>
<dbReference type="PANTHER" id="PTHR34068:SF2">
    <property type="entry name" value="UPF0145 PROTEIN SCO3412"/>
    <property type="match status" value="1"/>
</dbReference>
<dbReference type="PANTHER" id="PTHR34068">
    <property type="entry name" value="UPF0145 PROTEIN YBJQ"/>
    <property type="match status" value="1"/>
</dbReference>
<dbReference type="Pfam" id="PF01906">
    <property type="entry name" value="YbjQ_1"/>
    <property type="match status" value="1"/>
</dbReference>
<dbReference type="SUPFAM" id="SSF117782">
    <property type="entry name" value="YbjQ-like"/>
    <property type="match status" value="1"/>
</dbReference>
<comment type="similarity">
    <text evidence="1">Belongs to the UPF0145 family.</text>
</comment>
<reference key="1">
    <citation type="journal article" date="2005" name="Genome Res.">
        <title>Complete genome sequence of the hyperthermophilic archaeon Thermococcus kodakaraensis KOD1 and comparison with Pyrococcus genomes.</title>
        <authorList>
            <person name="Fukui T."/>
            <person name="Atomi H."/>
            <person name="Kanai T."/>
            <person name="Matsumi R."/>
            <person name="Fujiwara S."/>
            <person name="Imanaka T."/>
        </authorList>
    </citation>
    <scope>NUCLEOTIDE SEQUENCE [LARGE SCALE GENOMIC DNA]</scope>
    <source>
        <strain>ATCC BAA-918 / JCM 12380 / KOD1</strain>
    </source>
</reference>
<gene>
    <name type="ordered locus">TK1926</name>
</gene>
<feature type="chain" id="PRO_0000138502" description="UPF0145 protein TK1926">
    <location>
        <begin position="1"/>
        <end position="113"/>
    </location>
</feature>
<keyword id="KW-1185">Reference proteome</keyword>
<sequence>METVEGIMVVTTETIPGYRIVEVKGIARGGIVKATHIGRDIMAVLRNIKGGEVREYTQMMAEAREEALRRMALHAKELGANAVVNVRFATSNVGSSVAEVYAYGTAVVVEKEE</sequence>